<sequence>MLDIKLIRENPEIVKRDLIKRGETEKLKWIDEILELDKKWRENLKKINQLRKERNQLAVQIGKRKKAGEPIDDLLKRSNEIVKQIEELEKENEELKKKIDYYLWRLPNITHESVPVGESDEDNVPIRFWGKAKVWEGFLETFKEQSLGKMEYEVLSWRPRLHVDMLELLRGADLERAAKVSGARFYYLLNELVILDLALIRFALDKLIEKGFTPVIPPYMVRRFVEEGATTFDDFEDVIYKVEGEDLYLIPTAEHPLAGMHANEILDGKDLPLLYVGVSPCFRKEAGTAGKDTKGIFRVHQFHKVEQFVYSRPEESWEWHERIIANAEEIFQALEIPYRVVNICTGDLGYVAAKKYDIEAWMAGQGKFREVVSASNCTDWQARRLNIRFRDKTHEKPRFVHTLNSTAIATSRAIVAILENHQTEEGVVKLPKALWKYTGFKEILPAHMKEKCCQD</sequence>
<name>SYS_THEKO</name>
<gene>
    <name evidence="1" type="primary">serS</name>
    <name type="ordered locus">TK1140</name>
</gene>
<evidence type="ECO:0000255" key="1">
    <source>
        <dbReference type="HAMAP-Rule" id="MF_00176"/>
    </source>
</evidence>
<reference key="1">
    <citation type="journal article" date="2005" name="Genome Res.">
        <title>Complete genome sequence of the hyperthermophilic archaeon Thermococcus kodakaraensis KOD1 and comparison with Pyrococcus genomes.</title>
        <authorList>
            <person name="Fukui T."/>
            <person name="Atomi H."/>
            <person name="Kanai T."/>
            <person name="Matsumi R."/>
            <person name="Fujiwara S."/>
            <person name="Imanaka T."/>
        </authorList>
    </citation>
    <scope>NUCLEOTIDE SEQUENCE [LARGE SCALE GENOMIC DNA]</scope>
    <source>
        <strain>ATCC BAA-918 / JCM 12380 / KOD1</strain>
    </source>
</reference>
<proteinExistence type="inferred from homology"/>
<dbReference type="EC" id="6.1.1.11" evidence="1"/>
<dbReference type="EMBL" id="AP006878">
    <property type="protein sequence ID" value="BAD85329.1"/>
    <property type="molecule type" value="Genomic_DNA"/>
</dbReference>
<dbReference type="RefSeq" id="WP_011250091.1">
    <property type="nucleotide sequence ID" value="NC_006624.1"/>
</dbReference>
<dbReference type="SMR" id="Q5JE75"/>
<dbReference type="STRING" id="69014.TK1140"/>
<dbReference type="EnsemblBacteria" id="BAD85329">
    <property type="protein sequence ID" value="BAD85329"/>
    <property type="gene ID" value="TK1140"/>
</dbReference>
<dbReference type="GeneID" id="78447656"/>
<dbReference type="KEGG" id="tko:TK1140"/>
<dbReference type="PATRIC" id="fig|69014.16.peg.1116"/>
<dbReference type="eggNOG" id="arCOG00403">
    <property type="taxonomic scope" value="Archaea"/>
</dbReference>
<dbReference type="HOGENOM" id="CLU_023797_0_1_2"/>
<dbReference type="InParanoid" id="Q5JE75"/>
<dbReference type="OrthoDB" id="35932at2157"/>
<dbReference type="PhylomeDB" id="Q5JE75"/>
<dbReference type="UniPathway" id="UPA00906">
    <property type="reaction ID" value="UER00895"/>
</dbReference>
<dbReference type="Proteomes" id="UP000000536">
    <property type="component" value="Chromosome"/>
</dbReference>
<dbReference type="GO" id="GO:0005829">
    <property type="term" value="C:cytosol"/>
    <property type="evidence" value="ECO:0000318"/>
    <property type="project" value="GO_Central"/>
</dbReference>
<dbReference type="GO" id="GO:0005524">
    <property type="term" value="F:ATP binding"/>
    <property type="evidence" value="ECO:0007669"/>
    <property type="project" value="UniProtKB-UniRule"/>
</dbReference>
<dbReference type="GO" id="GO:0004828">
    <property type="term" value="F:serine-tRNA ligase activity"/>
    <property type="evidence" value="ECO:0000318"/>
    <property type="project" value="GO_Central"/>
</dbReference>
<dbReference type="GO" id="GO:0000049">
    <property type="term" value="F:tRNA binding"/>
    <property type="evidence" value="ECO:0000318"/>
    <property type="project" value="GO_Central"/>
</dbReference>
<dbReference type="GO" id="GO:0016260">
    <property type="term" value="P:selenocysteine biosynthetic process"/>
    <property type="evidence" value="ECO:0007669"/>
    <property type="project" value="UniProtKB-UniRule"/>
</dbReference>
<dbReference type="GO" id="GO:0006434">
    <property type="term" value="P:seryl-tRNA aminoacylation"/>
    <property type="evidence" value="ECO:0000318"/>
    <property type="project" value="GO_Central"/>
</dbReference>
<dbReference type="CDD" id="cd00770">
    <property type="entry name" value="SerRS_core"/>
    <property type="match status" value="1"/>
</dbReference>
<dbReference type="FunFam" id="1.10.287.40:FF:000004">
    <property type="entry name" value="Serine--tRNA ligase"/>
    <property type="match status" value="1"/>
</dbReference>
<dbReference type="FunFam" id="3.30.930.10:FF:000048">
    <property type="entry name" value="Serine--tRNA ligase"/>
    <property type="match status" value="1"/>
</dbReference>
<dbReference type="Gene3D" id="3.30.930.10">
    <property type="entry name" value="Bira Bifunctional Protein, Domain 2"/>
    <property type="match status" value="1"/>
</dbReference>
<dbReference type="Gene3D" id="1.10.287.40">
    <property type="entry name" value="Serine-tRNA synthetase, tRNA binding domain"/>
    <property type="match status" value="1"/>
</dbReference>
<dbReference type="HAMAP" id="MF_00176">
    <property type="entry name" value="Ser_tRNA_synth_type1"/>
    <property type="match status" value="1"/>
</dbReference>
<dbReference type="InterPro" id="IPR002314">
    <property type="entry name" value="aa-tRNA-synt_IIb"/>
</dbReference>
<dbReference type="InterPro" id="IPR006195">
    <property type="entry name" value="aa-tRNA-synth_II"/>
</dbReference>
<dbReference type="InterPro" id="IPR045864">
    <property type="entry name" value="aa-tRNA-synth_II/BPL/LPL"/>
</dbReference>
<dbReference type="InterPro" id="IPR002317">
    <property type="entry name" value="Ser-tRNA-ligase_type_1"/>
</dbReference>
<dbReference type="InterPro" id="IPR015866">
    <property type="entry name" value="Ser-tRNA-synth_1_N"/>
</dbReference>
<dbReference type="InterPro" id="IPR042103">
    <property type="entry name" value="SerRS_1_N_sf"/>
</dbReference>
<dbReference type="InterPro" id="IPR033729">
    <property type="entry name" value="SerRS_core"/>
</dbReference>
<dbReference type="InterPro" id="IPR010978">
    <property type="entry name" value="tRNA-bd_arm"/>
</dbReference>
<dbReference type="NCBIfam" id="TIGR00414">
    <property type="entry name" value="serS"/>
    <property type="match status" value="1"/>
</dbReference>
<dbReference type="PANTHER" id="PTHR11778">
    <property type="entry name" value="SERYL-TRNA SYNTHETASE"/>
    <property type="match status" value="1"/>
</dbReference>
<dbReference type="Pfam" id="PF02403">
    <property type="entry name" value="Seryl_tRNA_N"/>
    <property type="match status" value="1"/>
</dbReference>
<dbReference type="Pfam" id="PF00587">
    <property type="entry name" value="tRNA-synt_2b"/>
    <property type="match status" value="1"/>
</dbReference>
<dbReference type="PIRSF" id="PIRSF001529">
    <property type="entry name" value="Ser-tRNA-synth_IIa"/>
    <property type="match status" value="1"/>
</dbReference>
<dbReference type="PRINTS" id="PR00981">
    <property type="entry name" value="TRNASYNTHSER"/>
</dbReference>
<dbReference type="SUPFAM" id="SSF55681">
    <property type="entry name" value="Class II aaRS and biotin synthetases"/>
    <property type="match status" value="1"/>
</dbReference>
<dbReference type="SUPFAM" id="SSF46589">
    <property type="entry name" value="tRNA-binding arm"/>
    <property type="match status" value="1"/>
</dbReference>
<dbReference type="PROSITE" id="PS50862">
    <property type="entry name" value="AA_TRNA_LIGASE_II"/>
    <property type="match status" value="1"/>
</dbReference>
<keyword id="KW-0030">Aminoacyl-tRNA synthetase</keyword>
<keyword id="KW-0067">ATP-binding</keyword>
<keyword id="KW-0963">Cytoplasm</keyword>
<keyword id="KW-0436">Ligase</keyword>
<keyword id="KW-0547">Nucleotide-binding</keyword>
<keyword id="KW-0648">Protein biosynthesis</keyword>
<keyword id="KW-1185">Reference proteome</keyword>
<protein>
    <recommendedName>
        <fullName evidence="1">Serine--tRNA ligase</fullName>
        <ecNumber evidence="1">6.1.1.11</ecNumber>
    </recommendedName>
    <alternativeName>
        <fullName evidence="1">Seryl-tRNA synthetase</fullName>
        <shortName evidence="1">SerRS</shortName>
    </alternativeName>
    <alternativeName>
        <fullName evidence="1">Seryl-tRNA(Ser/Sec) synthetase</fullName>
    </alternativeName>
</protein>
<organism>
    <name type="scientific">Thermococcus kodakarensis (strain ATCC BAA-918 / JCM 12380 / KOD1)</name>
    <name type="common">Pyrococcus kodakaraensis (strain KOD1)</name>
    <dbReference type="NCBI Taxonomy" id="69014"/>
    <lineage>
        <taxon>Archaea</taxon>
        <taxon>Methanobacteriati</taxon>
        <taxon>Methanobacteriota</taxon>
        <taxon>Thermococci</taxon>
        <taxon>Thermococcales</taxon>
        <taxon>Thermococcaceae</taxon>
        <taxon>Thermococcus</taxon>
    </lineage>
</organism>
<comment type="function">
    <text evidence="1">Catalyzes the attachment of serine to tRNA(Ser). Is also able to aminoacylate tRNA(Sec) with serine, to form the misacylated tRNA L-seryl-tRNA(Sec), which will be further converted into selenocysteinyl-tRNA(Sec).</text>
</comment>
<comment type="catalytic activity">
    <reaction evidence="1">
        <text>tRNA(Ser) + L-serine + ATP = L-seryl-tRNA(Ser) + AMP + diphosphate + H(+)</text>
        <dbReference type="Rhea" id="RHEA:12292"/>
        <dbReference type="Rhea" id="RHEA-COMP:9669"/>
        <dbReference type="Rhea" id="RHEA-COMP:9703"/>
        <dbReference type="ChEBI" id="CHEBI:15378"/>
        <dbReference type="ChEBI" id="CHEBI:30616"/>
        <dbReference type="ChEBI" id="CHEBI:33019"/>
        <dbReference type="ChEBI" id="CHEBI:33384"/>
        <dbReference type="ChEBI" id="CHEBI:78442"/>
        <dbReference type="ChEBI" id="CHEBI:78533"/>
        <dbReference type="ChEBI" id="CHEBI:456215"/>
        <dbReference type="EC" id="6.1.1.11"/>
    </reaction>
</comment>
<comment type="catalytic activity">
    <reaction evidence="1">
        <text>tRNA(Sec) + L-serine + ATP = L-seryl-tRNA(Sec) + AMP + diphosphate + H(+)</text>
        <dbReference type="Rhea" id="RHEA:42580"/>
        <dbReference type="Rhea" id="RHEA-COMP:9742"/>
        <dbReference type="Rhea" id="RHEA-COMP:10128"/>
        <dbReference type="ChEBI" id="CHEBI:15378"/>
        <dbReference type="ChEBI" id="CHEBI:30616"/>
        <dbReference type="ChEBI" id="CHEBI:33019"/>
        <dbReference type="ChEBI" id="CHEBI:33384"/>
        <dbReference type="ChEBI" id="CHEBI:78442"/>
        <dbReference type="ChEBI" id="CHEBI:78533"/>
        <dbReference type="ChEBI" id="CHEBI:456215"/>
        <dbReference type="EC" id="6.1.1.11"/>
    </reaction>
</comment>
<comment type="pathway">
    <text evidence="1">Aminoacyl-tRNA biosynthesis; selenocysteinyl-tRNA(Sec) biosynthesis; L-seryl-tRNA(Sec) from L-serine and tRNA(Sec): step 1/1.</text>
</comment>
<comment type="subunit">
    <text evidence="1">Homodimer. The tRNA molecule binds across the dimer.</text>
</comment>
<comment type="subcellular location">
    <subcellularLocation>
        <location evidence="1">Cytoplasm</location>
    </subcellularLocation>
</comment>
<comment type="domain">
    <text evidence="1">Consists of two distinct domains, a catalytic core and a N-terminal extension that is involved in tRNA binding.</text>
</comment>
<comment type="similarity">
    <text evidence="1">Belongs to the class-II aminoacyl-tRNA synthetase family. Type-1 seryl-tRNA synthetase subfamily.</text>
</comment>
<accession>Q5JE75</accession>
<feature type="chain" id="PRO_0000122183" description="Serine--tRNA ligase">
    <location>
        <begin position="1"/>
        <end position="455"/>
    </location>
</feature>
<feature type="binding site" evidence="1">
    <location>
        <begin position="252"/>
        <end position="254"/>
    </location>
    <ligand>
        <name>L-serine</name>
        <dbReference type="ChEBI" id="CHEBI:33384"/>
    </ligand>
</feature>
<feature type="binding site" evidence="1">
    <location>
        <begin position="283"/>
        <end position="285"/>
    </location>
    <ligand>
        <name>ATP</name>
        <dbReference type="ChEBI" id="CHEBI:30616"/>
    </ligand>
</feature>
<feature type="binding site" evidence="1">
    <location>
        <position position="299"/>
    </location>
    <ligand>
        <name>ATP</name>
        <dbReference type="ChEBI" id="CHEBI:30616"/>
    </ligand>
</feature>
<feature type="binding site" evidence="1">
    <location>
        <position position="306"/>
    </location>
    <ligand>
        <name>L-serine</name>
        <dbReference type="ChEBI" id="CHEBI:33384"/>
    </ligand>
</feature>
<feature type="binding site" evidence="1">
    <location>
        <begin position="370"/>
        <end position="373"/>
    </location>
    <ligand>
        <name>ATP</name>
        <dbReference type="ChEBI" id="CHEBI:30616"/>
    </ligand>
</feature>
<feature type="binding site" evidence="1">
    <location>
        <position position="406"/>
    </location>
    <ligand>
        <name>L-serine</name>
        <dbReference type="ChEBI" id="CHEBI:33384"/>
    </ligand>
</feature>